<comment type="function">
    <text evidence="1">Small GTPase component of the coat protein complex II (COPII) which promotes the formation of transport vesicles from the endoplasmic reticulum (ER). The coat has two main functions, the physical deformation of the endoplasmic reticulum membrane into vesicles and the selection of cargo molecules. SAR1 controls the coat assembly in a stepwise manner. Activated SAR1-GTP binds to membranes first and recruits the SEC23/24 complex. These SEC23/24-SAR1 prebudding intermediates are then collected by the SEC13/31 complex as subunits polymerize to form coated transport vesicles. Conversion to SAR1-GDP triggers coat release and recycles COPII subunits (By similarity).</text>
</comment>
<comment type="catalytic activity">
    <reaction>
        <text>GTP + H2O = GDP + phosphate + H(+)</text>
        <dbReference type="Rhea" id="RHEA:19669"/>
        <dbReference type="ChEBI" id="CHEBI:15377"/>
        <dbReference type="ChEBI" id="CHEBI:15378"/>
        <dbReference type="ChEBI" id="CHEBI:37565"/>
        <dbReference type="ChEBI" id="CHEBI:43474"/>
        <dbReference type="ChEBI" id="CHEBI:58189"/>
    </reaction>
</comment>
<comment type="subunit">
    <text evidence="1">COPII is composed of at least 5 proteins: the SEC23/24 complex, the SEC13/31 complex and SAR1.</text>
</comment>
<comment type="subcellular location">
    <subcellularLocation>
        <location evidence="1">Cytoplasmic vesicle</location>
        <location evidence="1">COPII-coated vesicle membrane</location>
        <topology evidence="1">Peripheral membrane protein</topology>
        <orientation evidence="1">Cytoplasmic side</orientation>
    </subcellularLocation>
    <subcellularLocation>
        <location evidence="1">Endoplasmic reticulum membrane</location>
        <topology evidence="1">Peripheral membrane protein</topology>
        <orientation evidence="1">Cytoplasmic side</orientation>
    </subcellularLocation>
    <subcellularLocation>
        <location evidence="1">Golgi apparatus membrane</location>
        <topology evidence="1">Peripheral membrane protein</topology>
        <orientation evidence="1">Cytoplasmic side</orientation>
    </subcellularLocation>
</comment>
<comment type="similarity">
    <text evidence="2">Belongs to the small GTPase superfamily. SAR1 family.</text>
</comment>
<comment type="sequence caution" evidence="2">
    <conflict type="erroneous initiation">
        <sequence resource="EMBL-CDS" id="EAT85260"/>
    </conflict>
</comment>
<dbReference type="EC" id="3.6.5.-"/>
<dbReference type="EMBL" id="CH445335">
    <property type="protein sequence ID" value="EAT85260.2"/>
    <property type="status" value="ALT_INIT"/>
    <property type="molecule type" value="Genomic_DNA"/>
</dbReference>
<dbReference type="RefSeq" id="XP_001798121.1">
    <property type="nucleotide sequence ID" value="XM_001798069.1"/>
</dbReference>
<dbReference type="SMR" id="Q0UKC0"/>
<dbReference type="FunCoup" id="Q0UKC0">
    <property type="interactions" value="869"/>
</dbReference>
<dbReference type="STRING" id="321614.Q0UKC0"/>
<dbReference type="GeneID" id="5975014"/>
<dbReference type="KEGG" id="pno:SNOG_07794"/>
<dbReference type="VEuPathDB" id="FungiDB:JI435_077940"/>
<dbReference type="eggNOG" id="KOG0077">
    <property type="taxonomic scope" value="Eukaryota"/>
</dbReference>
<dbReference type="InParanoid" id="Q0UKC0"/>
<dbReference type="Proteomes" id="UP000001055">
    <property type="component" value="Unassembled WGS sequence"/>
</dbReference>
<dbReference type="GO" id="GO:0030127">
    <property type="term" value="C:COPII vesicle coat"/>
    <property type="evidence" value="ECO:0000318"/>
    <property type="project" value="GO_Central"/>
</dbReference>
<dbReference type="GO" id="GO:0070971">
    <property type="term" value="C:endoplasmic reticulum exit site"/>
    <property type="evidence" value="ECO:0000318"/>
    <property type="project" value="GO_Central"/>
</dbReference>
<dbReference type="GO" id="GO:0005789">
    <property type="term" value="C:endoplasmic reticulum membrane"/>
    <property type="evidence" value="ECO:0007669"/>
    <property type="project" value="UniProtKB-SubCell"/>
</dbReference>
<dbReference type="GO" id="GO:0000139">
    <property type="term" value="C:Golgi membrane"/>
    <property type="evidence" value="ECO:0007669"/>
    <property type="project" value="UniProtKB-SubCell"/>
</dbReference>
<dbReference type="GO" id="GO:0005525">
    <property type="term" value="F:GTP binding"/>
    <property type="evidence" value="ECO:0007669"/>
    <property type="project" value="UniProtKB-KW"/>
</dbReference>
<dbReference type="GO" id="GO:0003924">
    <property type="term" value="F:GTPase activity"/>
    <property type="evidence" value="ECO:0000318"/>
    <property type="project" value="GO_Central"/>
</dbReference>
<dbReference type="GO" id="GO:0006888">
    <property type="term" value="P:endoplasmic reticulum to Golgi vesicle-mediated transport"/>
    <property type="evidence" value="ECO:0000318"/>
    <property type="project" value="GO_Central"/>
</dbReference>
<dbReference type="GO" id="GO:0006886">
    <property type="term" value="P:intracellular protein transport"/>
    <property type="evidence" value="ECO:0007669"/>
    <property type="project" value="InterPro"/>
</dbReference>
<dbReference type="GO" id="GO:0061024">
    <property type="term" value="P:membrane organization"/>
    <property type="evidence" value="ECO:0000318"/>
    <property type="project" value="GO_Central"/>
</dbReference>
<dbReference type="GO" id="GO:0003400">
    <property type="term" value="P:regulation of COPII vesicle coating"/>
    <property type="evidence" value="ECO:0000318"/>
    <property type="project" value="GO_Central"/>
</dbReference>
<dbReference type="GO" id="GO:0016050">
    <property type="term" value="P:vesicle organization"/>
    <property type="evidence" value="ECO:0000318"/>
    <property type="project" value="GO_Central"/>
</dbReference>
<dbReference type="CDD" id="cd00879">
    <property type="entry name" value="Sar1"/>
    <property type="match status" value="1"/>
</dbReference>
<dbReference type="FunFam" id="3.40.50.300:FF:000161">
    <property type="entry name" value="Small COPII coat GTPase"/>
    <property type="match status" value="1"/>
</dbReference>
<dbReference type="Gene3D" id="3.40.50.300">
    <property type="entry name" value="P-loop containing nucleotide triphosphate hydrolases"/>
    <property type="match status" value="1"/>
</dbReference>
<dbReference type="InterPro" id="IPR027417">
    <property type="entry name" value="P-loop_NTPase"/>
</dbReference>
<dbReference type="InterPro" id="IPR005225">
    <property type="entry name" value="Small_GTP-bd"/>
</dbReference>
<dbReference type="InterPro" id="IPR006689">
    <property type="entry name" value="Small_GTPase_ARF/SAR"/>
</dbReference>
<dbReference type="InterPro" id="IPR006687">
    <property type="entry name" value="Small_GTPase_SAR1"/>
</dbReference>
<dbReference type="NCBIfam" id="TIGR00231">
    <property type="entry name" value="small_GTP"/>
    <property type="match status" value="1"/>
</dbReference>
<dbReference type="PANTHER" id="PTHR45684">
    <property type="entry name" value="RE74312P"/>
    <property type="match status" value="1"/>
</dbReference>
<dbReference type="Pfam" id="PF00025">
    <property type="entry name" value="Arf"/>
    <property type="match status" value="1"/>
</dbReference>
<dbReference type="PRINTS" id="PR00328">
    <property type="entry name" value="SAR1GTPBP"/>
</dbReference>
<dbReference type="SMART" id="SM00177">
    <property type="entry name" value="ARF"/>
    <property type="match status" value="1"/>
</dbReference>
<dbReference type="SMART" id="SM00178">
    <property type="entry name" value="SAR"/>
    <property type="match status" value="1"/>
</dbReference>
<dbReference type="SUPFAM" id="SSF52540">
    <property type="entry name" value="P-loop containing nucleoside triphosphate hydrolases"/>
    <property type="match status" value="1"/>
</dbReference>
<dbReference type="PROSITE" id="PS51422">
    <property type="entry name" value="SAR1"/>
    <property type="match status" value="1"/>
</dbReference>
<gene>
    <name type="primary">SAR1</name>
    <name type="ORF">SNOG_07794</name>
</gene>
<evidence type="ECO:0000250" key="1"/>
<evidence type="ECO:0000305" key="2"/>
<protein>
    <recommendedName>
        <fullName>Small COPII coat GTPase SAR1</fullName>
        <ecNumber>3.6.5.-</ecNumber>
    </recommendedName>
</protein>
<keyword id="KW-0968">Cytoplasmic vesicle</keyword>
<keyword id="KW-0256">Endoplasmic reticulum</keyword>
<keyword id="KW-0931">ER-Golgi transport</keyword>
<keyword id="KW-0333">Golgi apparatus</keyword>
<keyword id="KW-0342">GTP-binding</keyword>
<keyword id="KW-0378">Hydrolase</keyword>
<keyword id="KW-0472">Membrane</keyword>
<keyword id="KW-0547">Nucleotide-binding</keyword>
<keyword id="KW-0653">Protein transport</keyword>
<keyword id="KW-0813">Transport</keyword>
<feature type="chain" id="PRO_0000295521" description="Small COPII coat GTPase SAR1">
    <location>
        <begin position="1"/>
        <end position="185"/>
    </location>
</feature>
<feature type="binding site" evidence="1">
    <location>
        <begin position="23"/>
        <end position="30"/>
    </location>
    <ligand>
        <name>GTP</name>
        <dbReference type="ChEBI" id="CHEBI:37565"/>
    </ligand>
</feature>
<feature type="binding site" evidence="1">
    <location>
        <begin position="66"/>
        <end position="69"/>
    </location>
    <ligand>
        <name>GTP</name>
        <dbReference type="ChEBI" id="CHEBI:37565"/>
    </ligand>
</feature>
<feature type="binding site" evidence="1">
    <location>
        <begin position="125"/>
        <end position="128"/>
    </location>
    <ligand>
        <name>GTP</name>
        <dbReference type="ChEBI" id="CHEBI:37565"/>
    </ligand>
</feature>
<name>SAR1_PHANO</name>
<organism>
    <name type="scientific">Phaeosphaeria nodorum (strain SN15 / ATCC MYA-4574 / FGSC 10173)</name>
    <name type="common">Glume blotch fungus</name>
    <name type="synonym">Parastagonospora nodorum</name>
    <dbReference type="NCBI Taxonomy" id="321614"/>
    <lineage>
        <taxon>Eukaryota</taxon>
        <taxon>Fungi</taxon>
        <taxon>Dikarya</taxon>
        <taxon>Ascomycota</taxon>
        <taxon>Pezizomycotina</taxon>
        <taxon>Dothideomycetes</taxon>
        <taxon>Pleosporomycetidae</taxon>
        <taxon>Pleosporales</taxon>
        <taxon>Pleosporineae</taxon>
        <taxon>Phaeosphaeriaceae</taxon>
        <taxon>Parastagonospora</taxon>
    </lineage>
</organism>
<reference key="1">
    <citation type="journal article" date="2007" name="Plant Cell">
        <title>Dothideomycete-plant interactions illuminated by genome sequencing and EST analysis of the wheat pathogen Stagonospora nodorum.</title>
        <authorList>
            <person name="Hane J.K."/>
            <person name="Lowe R.G.T."/>
            <person name="Solomon P.S."/>
            <person name="Tan K.-C."/>
            <person name="Schoch C.L."/>
            <person name="Spatafora J.W."/>
            <person name="Crous P.W."/>
            <person name="Kodira C.D."/>
            <person name="Birren B.W."/>
            <person name="Galagan J.E."/>
            <person name="Torriani S.F.F."/>
            <person name="McDonald B.A."/>
            <person name="Oliver R.P."/>
        </authorList>
    </citation>
    <scope>NUCLEOTIDE SEQUENCE [LARGE SCALE GENOMIC DNA]</scope>
    <source>
        <strain>SN15 / ATCC MYA-4574 / FGSC 10173</strain>
    </source>
</reference>
<sequence length="185" mass="20733">MTVWDVLSSLGLMNKHAKLLFLGLDNAGKTTLLHMLKNDRVAVLQPTLHPTSEELSIGNVKFTTFDLGGHAQARRLWRDYFPEVSGIVFLVDAKDHERLNESKAELDALLAMEELKNTPFVILGNKIDHPEAVSEDQLRATLGLYQTTGKGKVPLEGIRPIEVFMCSVVMRQGYGEGIRWLSQYV</sequence>
<proteinExistence type="inferred from homology"/>
<accession>Q0UKC0</accession>